<keyword id="KW-0030">Aminoacyl-tRNA synthetase</keyword>
<keyword id="KW-0067">ATP-binding</keyword>
<keyword id="KW-0963">Cytoplasm</keyword>
<keyword id="KW-0436">Ligase</keyword>
<keyword id="KW-0547">Nucleotide-binding</keyword>
<keyword id="KW-0648">Protein biosynthesis</keyword>
<keyword id="KW-1185">Reference proteome</keyword>
<name>SYP_SULDN</name>
<feature type="chain" id="PRO_0000248920" description="Proline--tRNA ligase">
    <location>
        <begin position="1"/>
        <end position="435"/>
    </location>
</feature>
<protein>
    <recommendedName>
        <fullName>Proline--tRNA ligase</fullName>
        <ecNumber>6.1.1.15</ecNumber>
    </recommendedName>
    <alternativeName>
        <fullName>Prolyl-tRNA synthetase</fullName>
        <shortName>ProRS</shortName>
    </alternativeName>
</protein>
<evidence type="ECO:0000250" key="1"/>
<evidence type="ECO:0000305" key="2"/>
<dbReference type="EC" id="6.1.1.15"/>
<dbReference type="EMBL" id="CP000153">
    <property type="protein sequence ID" value="ABB44138.1"/>
    <property type="molecule type" value="Genomic_DNA"/>
</dbReference>
<dbReference type="RefSeq" id="WP_011372490.1">
    <property type="nucleotide sequence ID" value="NC_007575.1"/>
</dbReference>
<dbReference type="SMR" id="Q30S93"/>
<dbReference type="STRING" id="326298.Suden_0860"/>
<dbReference type="KEGG" id="tdn:Suden_0860"/>
<dbReference type="eggNOG" id="COG0442">
    <property type="taxonomic scope" value="Bacteria"/>
</dbReference>
<dbReference type="HOGENOM" id="CLU_016739_4_2_7"/>
<dbReference type="OrthoDB" id="9809052at2"/>
<dbReference type="Proteomes" id="UP000002714">
    <property type="component" value="Chromosome"/>
</dbReference>
<dbReference type="GO" id="GO:0005829">
    <property type="term" value="C:cytosol"/>
    <property type="evidence" value="ECO:0007669"/>
    <property type="project" value="TreeGrafter"/>
</dbReference>
<dbReference type="GO" id="GO:0005524">
    <property type="term" value="F:ATP binding"/>
    <property type="evidence" value="ECO:0007669"/>
    <property type="project" value="UniProtKB-KW"/>
</dbReference>
<dbReference type="GO" id="GO:0004827">
    <property type="term" value="F:proline-tRNA ligase activity"/>
    <property type="evidence" value="ECO:0007669"/>
    <property type="project" value="UniProtKB-EC"/>
</dbReference>
<dbReference type="GO" id="GO:0006433">
    <property type="term" value="P:prolyl-tRNA aminoacylation"/>
    <property type="evidence" value="ECO:0007669"/>
    <property type="project" value="InterPro"/>
</dbReference>
<dbReference type="CDD" id="cd00861">
    <property type="entry name" value="ProRS_anticodon_short"/>
    <property type="match status" value="1"/>
</dbReference>
<dbReference type="CDD" id="cd00779">
    <property type="entry name" value="ProRS_core_prok"/>
    <property type="match status" value="1"/>
</dbReference>
<dbReference type="FunFam" id="3.30.930.10:FF:000066">
    <property type="entry name" value="Proline--tRNA ligase"/>
    <property type="match status" value="1"/>
</dbReference>
<dbReference type="Gene3D" id="3.40.50.800">
    <property type="entry name" value="Anticodon-binding domain"/>
    <property type="match status" value="1"/>
</dbReference>
<dbReference type="Gene3D" id="3.30.930.10">
    <property type="entry name" value="Bira Bifunctional Protein, Domain 2"/>
    <property type="match status" value="1"/>
</dbReference>
<dbReference type="InterPro" id="IPR002314">
    <property type="entry name" value="aa-tRNA-synt_IIb"/>
</dbReference>
<dbReference type="InterPro" id="IPR006195">
    <property type="entry name" value="aa-tRNA-synth_II"/>
</dbReference>
<dbReference type="InterPro" id="IPR045864">
    <property type="entry name" value="aa-tRNA-synth_II/BPL/LPL"/>
</dbReference>
<dbReference type="InterPro" id="IPR004154">
    <property type="entry name" value="Anticodon-bd"/>
</dbReference>
<dbReference type="InterPro" id="IPR036621">
    <property type="entry name" value="Anticodon-bd_dom_sf"/>
</dbReference>
<dbReference type="InterPro" id="IPR002316">
    <property type="entry name" value="Pro-tRNA-ligase_IIa"/>
</dbReference>
<dbReference type="InterPro" id="IPR004500">
    <property type="entry name" value="Pro-tRNA-synth_IIa_bac-type"/>
</dbReference>
<dbReference type="InterPro" id="IPR050062">
    <property type="entry name" value="Pro-tRNA_synthetase"/>
</dbReference>
<dbReference type="InterPro" id="IPR044140">
    <property type="entry name" value="ProRS_anticodon_short"/>
</dbReference>
<dbReference type="InterPro" id="IPR033730">
    <property type="entry name" value="ProRS_core_prok"/>
</dbReference>
<dbReference type="NCBIfam" id="TIGR00409">
    <property type="entry name" value="proS_fam_II"/>
    <property type="match status" value="1"/>
</dbReference>
<dbReference type="PANTHER" id="PTHR42753">
    <property type="entry name" value="MITOCHONDRIAL RIBOSOME PROTEIN L39/PROLYL-TRNA LIGASE FAMILY MEMBER"/>
    <property type="match status" value="1"/>
</dbReference>
<dbReference type="PANTHER" id="PTHR42753:SF2">
    <property type="entry name" value="PROLINE--TRNA LIGASE"/>
    <property type="match status" value="1"/>
</dbReference>
<dbReference type="Pfam" id="PF03129">
    <property type="entry name" value="HGTP_anticodon"/>
    <property type="match status" value="1"/>
</dbReference>
<dbReference type="Pfam" id="PF00587">
    <property type="entry name" value="tRNA-synt_2b"/>
    <property type="match status" value="1"/>
</dbReference>
<dbReference type="PRINTS" id="PR01046">
    <property type="entry name" value="TRNASYNTHPRO"/>
</dbReference>
<dbReference type="SUPFAM" id="SSF52954">
    <property type="entry name" value="Class II aaRS ABD-related"/>
    <property type="match status" value="1"/>
</dbReference>
<dbReference type="SUPFAM" id="SSF55681">
    <property type="entry name" value="Class II aaRS and biotin synthetases"/>
    <property type="match status" value="1"/>
</dbReference>
<dbReference type="PROSITE" id="PS50862">
    <property type="entry name" value="AA_TRNA_LIGASE_II"/>
    <property type="match status" value="1"/>
</dbReference>
<sequence>MRRSRAFIPTAKEAPSDATLPSHKFLVRGGFINQQGAGLYNFLPLGKIVLEKIRAVVKEELDLAGCNEVQLSFVTPIGLWERSGRSEAMGKEMLRINDRHQNEFVLSPTNEEAMVELVKNRVTSYKDLPLNLYQINTKFRDEARPRYGLLRGREFLMKDGYSFHSSTQDMIREFDLMEETYKKIFTRLGLDFRVVAADSGAIGGDGSKEFHVLADSGEDTLIVCQSCNYGANIETIDEFKDKIDELNEKSYEELKELKIDQKCSCGANLHFKKGIEVGHIFQLGTKYSAALEANFSDENGRSKPFEMATFGIGVSRLVAAIIEQNHDESGCIWTKESAPYIVNIMVSNVKDEAQMSLGEDLYAKLRAAKVDVIFDDTKERFGFKMKDAELIGFPYTLIIGKELEGGLVQIFDRKTKESISVESSSAYDKIMELIK</sequence>
<organism>
    <name type="scientific">Sulfurimonas denitrificans (strain ATCC 33889 / DSM 1251)</name>
    <name type="common">Thiomicrospira denitrificans (strain ATCC 33889 / DSM 1251)</name>
    <dbReference type="NCBI Taxonomy" id="326298"/>
    <lineage>
        <taxon>Bacteria</taxon>
        <taxon>Pseudomonadati</taxon>
        <taxon>Campylobacterota</taxon>
        <taxon>Epsilonproteobacteria</taxon>
        <taxon>Campylobacterales</taxon>
        <taxon>Sulfurimonadaceae</taxon>
        <taxon>Sulfurimonas</taxon>
    </lineage>
</organism>
<accession>Q30S93</accession>
<proteinExistence type="inferred from homology"/>
<reference key="1">
    <citation type="journal article" date="2008" name="Appl. Environ. Microbiol.">
        <title>Genome of the epsilonproteobacterial chemolithoautotroph Sulfurimonas denitrificans.</title>
        <authorList>
            <person name="Sievert S.M."/>
            <person name="Scott K.M."/>
            <person name="Klotz M.G."/>
            <person name="Chain P.S.G."/>
            <person name="Hauser L.J."/>
            <person name="Hemp J."/>
            <person name="Huegler M."/>
            <person name="Land M."/>
            <person name="Lapidus A."/>
            <person name="Larimer F.W."/>
            <person name="Lucas S."/>
            <person name="Malfatti S.A."/>
            <person name="Meyer F."/>
            <person name="Paulsen I.T."/>
            <person name="Ren Q."/>
            <person name="Simon J."/>
            <person name="Bailey K."/>
            <person name="Diaz E."/>
            <person name="Fitzpatrick K.A."/>
            <person name="Glover B."/>
            <person name="Gwatney N."/>
            <person name="Korajkic A."/>
            <person name="Long A."/>
            <person name="Mobberley J.M."/>
            <person name="Pantry S.N."/>
            <person name="Pazder G."/>
            <person name="Peterson S."/>
            <person name="Quintanilla J.D."/>
            <person name="Sprinkle R."/>
            <person name="Stephens J."/>
            <person name="Thomas P."/>
            <person name="Vaughn R."/>
            <person name="Weber M.J."/>
            <person name="Wooten L.L."/>
        </authorList>
    </citation>
    <scope>NUCLEOTIDE SEQUENCE [LARGE SCALE GENOMIC DNA]</scope>
    <source>
        <strain>ATCC 33889 / DSM 1251</strain>
    </source>
</reference>
<gene>
    <name type="primary">proS</name>
    <name type="ordered locus">Suden_0860</name>
</gene>
<comment type="function">
    <text evidence="1">Catalyzes the attachment of proline to tRNA(Pro) in a two-step reaction: proline is first activated by ATP to form Pro-AMP and then transferred to the acceptor end of tRNA(Pro).</text>
</comment>
<comment type="catalytic activity">
    <reaction>
        <text>tRNA(Pro) + L-proline + ATP = L-prolyl-tRNA(Pro) + AMP + diphosphate</text>
        <dbReference type="Rhea" id="RHEA:14305"/>
        <dbReference type="Rhea" id="RHEA-COMP:9700"/>
        <dbReference type="Rhea" id="RHEA-COMP:9702"/>
        <dbReference type="ChEBI" id="CHEBI:30616"/>
        <dbReference type="ChEBI" id="CHEBI:33019"/>
        <dbReference type="ChEBI" id="CHEBI:60039"/>
        <dbReference type="ChEBI" id="CHEBI:78442"/>
        <dbReference type="ChEBI" id="CHEBI:78532"/>
        <dbReference type="ChEBI" id="CHEBI:456215"/>
        <dbReference type="EC" id="6.1.1.15"/>
    </reaction>
</comment>
<comment type="subunit">
    <text evidence="1">Homodimer.</text>
</comment>
<comment type="subcellular location">
    <subcellularLocation>
        <location evidence="1">Cytoplasm</location>
    </subcellularLocation>
</comment>
<comment type="similarity">
    <text evidence="2">Belongs to the class-II aminoacyl-tRNA synthetase family. ProS type 2 subfamily.</text>
</comment>